<organism>
    <name type="scientific">Segestria florentina</name>
    <name type="common">Tube-web spider</name>
    <name type="synonym">Segestria gracilis</name>
    <dbReference type="NCBI Taxonomy" id="31925"/>
    <lineage>
        <taxon>Eukaryota</taxon>
        <taxon>Metazoa</taxon>
        <taxon>Ecdysozoa</taxon>
        <taxon>Arthropoda</taxon>
        <taxon>Chelicerata</taxon>
        <taxon>Arachnida</taxon>
        <taxon>Araneae</taxon>
        <taxon>Araneomorphae</taxon>
        <taxon>Haplogynae</taxon>
        <taxon>Dysderoidea</taxon>
        <taxon>Segestriidae</taxon>
        <taxon>Segestria</taxon>
    </lineage>
</organism>
<dbReference type="SMR" id="P61101"/>
<dbReference type="ArachnoServer" id="AS000122">
    <property type="toxin name" value="mu-segestritoxin-Sf1g"/>
</dbReference>
<dbReference type="GO" id="GO:0005576">
    <property type="term" value="C:extracellular region"/>
    <property type="evidence" value="ECO:0007669"/>
    <property type="project" value="UniProtKB-SubCell"/>
</dbReference>
<dbReference type="GO" id="GO:0090729">
    <property type="term" value="F:toxin activity"/>
    <property type="evidence" value="ECO:0007669"/>
    <property type="project" value="UniProtKB-KW"/>
</dbReference>
<dbReference type="Gene3D" id="4.10.40.60">
    <property type="match status" value="1"/>
</dbReference>
<dbReference type="InterPro" id="IPR053718">
    <property type="entry name" value="Insecticidal_knottin-like_sf"/>
</dbReference>
<dbReference type="InterPro" id="IPR012633">
    <property type="entry name" value="Toxin_28"/>
</dbReference>
<dbReference type="Pfam" id="PF08115">
    <property type="entry name" value="Toxin_28"/>
    <property type="match status" value="1"/>
</dbReference>
<accession>P61101</accession>
<name>SFI7_SEGFL</name>
<comment type="function">
    <text evidence="1">Insecticidal toxin. It inhibits insect voltage-gated sodium channels (Nav) by partially blocking the channel pore in DUM neurons from the American cockroach, not by acting as a gating modifier. The inhibition is only partially reversible after prolonged washout. In vivo, the toxin causes flaccid paralysis followed by death when injected into Heliothis virescens larvae. It also causes uncoordinated movements followed by full paralysis to sheep blowflies (Lucilia cuprina). When the toxin is fused to snowdrop lectin, it is orally active against larvae of the tomato moth (Laconobia oleracea), the rice brown planthopper (Nilaparvata lugens), and the peach-potato aphid (Myzus persicae).</text>
</comment>
<comment type="subcellular location">
    <subcellularLocation>
        <location evidence="1">Secreted</location>
    </subcellularLocation>
</comment>
<comment type="tissue specificity">
    <text evidence="4">Expressed by the venom gland.</text>
</comment>
<comment type="domain">
    <text evidence="1">The presence of a 'disulfide through disulfide knot' structurally defines this protein as a knottin.</text>
</comment>
<comment type="similarity">
    <text evidence="3">Belongs to the neurotoxin 16 (SFI) family.</text>
</comment>
<proteinExistence type="inferred from homology"/>
<evidence type="ECO:0000250" key="1">
    <source>
        <dbReference type="UniProtKB" id="P61095"/>
    </source>
</evidence>
<evidence type="ECO:0000303" key="2">
    <source>
    </source>
</evidence>
<evidence type="ECO:0000305" key="3"/>
<evidence type="ECO:0000305" key="4">
    <source>
    </source>
</evidence>
<feature type="chain" id="PRO_0000087622" description="Mu-segestritoxin-Sf1g" evidence="4">
    <location>
        <begin position="1"/>
        <end position="46"/>
    </location>
</feature>
<feature type="region of interest" description="Keys region for toxin activity" evidence="1">
    <location>
        <begin position="31"/>
        <end position="33"/>
    </location>
</feature>
<feature type="disulfide bond" evidence="1">
    <location>
        <begin position="3"/>
        <end position="19"/>
    </location>
</feature>
<feature type="disulfide bond" evidence="1">
    <location>
        <begin position="10"/>
        <end position="22"/>
    </location>
</feature>
<feature type="disulfide bond" evidence="1">
    <location>
        <begin position="18"/>
        <end position="42"/>
    </location>
</feature>
<feature type="disulfide bond" evidence="1">
    <location>
        <begin position="24"/>
        <end position="40"/>
    </location>
</feature>
<reference key="1">
    <citation type="journal article" date="2002" name="Toxicon">
        <title>Novel insecticidal toxins from the venom of the spider Segestria florentina.</title>
        <authorList>
            <person name="Lipkin A."/>
            <person name="Kozlov S."/>
            <person name="Nosyreva E."/>
            <person name="Blake A."/>
            <person name="Windass J.D."/>
            <person name="Grishin E."/>
        </authorList>
    </citation>
    <scope>NUCLEOTIDE SEQUENCE [MRNA]</scope>
    <source>
        <tissue>Venom gland</tissue>
    </source>
</reference>
<keyword id="KW-1015">Disulfide bond</keyword>
<keyword id="KW-0960">Knottin</keyword>
<keyword id="KW-0964">Secreted</keyword>
<keyword id="KW-0800">Toxin</keyword>
<protein>
    <recommendedName>
        <fullName evidence="3">Mu-segestritoxin-Sf1g</fullName>
        <shortName evidence="3">Mu-SGTX-Sf1g</shortName>
    </recommendedName>
    <alternativeName>
        <fullName evidence="2">Toxin SFI7</fullName>
    </alternativeName>
</protein>
<sequence>KECMADGTVCYIHNHNDCCGSCLCPNGPLARPWEVLVGNCKCGPKA</sequence>